<name>UBID_GLAP5</name>
<sequence>MKYKNLREFLDLLEQKGELKRITQEIDPYLEMTEIADRTLSKGGPALLFENPKGYKIPVLCNLFGTPERVAMGMGQEDTKALRELGKLLAFLKEPEPPKGFKDLIGQLPQWKQVLNMPSKVLNKADCQQVVISDDDVDLYQLPIMHCWQGDVAPLVTWGLTITQGPYKKRLNLGIYRQQLIGKNKLIMRWLSHRGGALDFQEWKEANSDKPFPVSVALGADPATILAAVTPIPDTLSEYAFAGLLRGHKTEVVKSISNDLEVPASAEIVLEGYIDLNETALEGPYGDHTGYYNEQEYFPVFTVTHITMRKDAIYHSTYTGRPPDEPAVLGEALNEVFIPILQKQFPEIVDFYLPPEGCSYRLAVVTIKKQYAGHAKRVMMGVWSFLRQFMYTKFVIVCDDDVNARDWKDVIWAITTRCDPARDATLIENTPIDYLDFASPIAGLGSKMGIDATNKWAGETQREWGTPITKNPDVVKRVDEIWESLGIED</sequence>
<accession>B8F7S2</accession>
<proteinExistence type="inferred from homology"/>
<gene>
    <name evidence="1" type="primary">ubiD</name>
    <name type="ordered locus">HAPS_1885</name>
</gene>
<keyword id="KW-1003">Cell membrane</keyword>
<keyword id="KW-0210">Decarboxylase</keyword>
<keyword id="KW-0285">Flavoprotein</keyword>
<keyword id="KW-0288">FMN</keyword>
<keyword id="KW-0456">Lyase</keyword>
<keyword id="KW-0464">Manganese</keyword>
<keyword id="KW-0472">Membrane</keyword>
<keyword id="KW-0479">Metal-binding</keyword>
<keyword id="KW-1185">Reference proteome</keyword>
<keyword id="KW-0831">Ubiquinone biosynthesis</keyword>
<reference key="1">
    <citation type="journal article" date="2009" name="J. Bacteriol.">
        <title>Complete genome sequence of Haemophilus parasuis SH0165.</title>
        <authorList>
            <person name="Yue M."/>
            <person name="Yang F."/>
            <person name="Yang J."/>
            <person name="Bei W."/>
            <person name="Cai X."/>
            <person name="Chen L."/>
            <person name="Dong J."/>
            <person name="Zhou R."/>
            <person name="Jin M."/>
            <person name="Jin Q."/>
            <person name="Chen H."/>
        </authorList>
    </citation>
    <scope>NUCLEOTIDE SEQUENCE [LARGE SCALE GENOMIC DNA]</scope>
    <source>
        <strain>SH0165</strain>
    </source>
</reference>
<feature type="chain" id="PRO_1000186713" description="3-octaprenyl-4-hydroxybenzoate carboxy-lyase">
    <location>
        <begin position="1"/>
        <end position="489"/>
    </location>
</feature>
<feature type="active site" description="Proton donor" evidence="1">
    <location>
        <position position="287"/>
    </location>
</feature>
<feature type="binding site" evidence="1">
    <location>
        <position position="172"/>
    </location>
    <ligand>
        <name>Mn(2+)</name>
        <dbReference type="ChEBI" id="CHEBI:29035"/>
    </ligand>
</feature>
<feature type="binding site" evidence="1">
    <location>
        <begin position="175"/>
        <end position="177"/>
    </location>
    <ligand>
        <name>prenylated FMN</name>
        <dbReference type="ChEBI" id="CHEBI:87746"/>
    </ligand>
</feature>
<feature type="binding site" evidence="1">
    <location>
        <begin position="189"/>
        <end position="191"/>
    </location>
    <ligand>
        <name>prenylated FMN</name>
        <dbReference type="ChEBI" id="CHEBI:87746"/>
    </ligand>
</feature>
<feature type="binding site" evidence="1">
    <location>
        <begin position="194"/>
        <end position="195"/>
    </location>
    <ligand>
        <name>prenylated FMN</name>
        <dbReference type="ChEBI" id="CHEBI:87746"/>
    </ligand>
</feature>
<feature type="binding site" evidence="1">
    <location>
        <position position="238"/>
    </location>
    <ligand>
        <name>Mn(2+)</name>
        <dbReference type="ChEBI" id="CHEBI:29035"/>
    </ligand>
</feature>
<evidence type="ECO:0000255" key="1">
    <source>
        <dbReference type="HAMAP-Rule" id="MF_01636"/>
    </source>
</evidence>
<dbReference type="EC" id="4.1.1.98" evidence="1"/>
<dbReference type="EMBL" id="CP001321">
    <property type="protein sequence ID" value="ACL33374.1"/>
    <property type="molecule type" value="Genomic_DNA"/>
</dbReference>
<dbReference type="RefSeq" id="WP_015939958.1">
    <property type="nucleotide sequence ID" value="NC_011852.1"/>
</dbReference>
<dbReference type="SMR" id="B8F7S2"/>
<dbReference type="STRING" id="557723.HAPS_1885"/>
<dbReference type="KEGG" id="hap:HAPS_1885"/>
<dbReference type="PATRIC" id="fig|557723.8.peg.1870"/>
<dbReference type="HOGENOM" id="CLU_023348_4_1_6"/>
<dbReference type="UniPathway" id="UPA00232"/>
<dbReference type="Proteomes" id="UP000006743">
    <property type="component" value="Chromosome"/>
</dbReference>
<dbReference type="GO" id="GO:0005829">
    <property type="term" value="C:cytosol"/>
    <property type="evidence" value="ECO:0007669"/>
    <property type="project" value="TreeGrafter"/>
</dbReference>
<dbReference type="GO" id="GO:0005886">
    <property type="term" value="C:plasma membrane"/>
    <property type="evidence" value="ECO:0007669"/>
    <property type="project" value="UniProtKB-SubCell"/>
</dbReference>
<dbReference type="GO" id="GO:0008694">
    <property type="term" value="F:3-octaprenyl-4-hydroxybenzoate carboxy-lyase activity"/>
    <property type="evidence" value="ECO:0007669"/>
    <property type="project" value="UniProtKB-UniRule"/>
</dbReference>
<dbReference type="GO" id="GO:0046872">
    <property type="term" value="F:metal ion binding"/>
    <property type="evidence" value="ECO:0007669"/>
    <property type="project" value="UniProtKB-KW"/>
</dbReference>
<dbReference type="GO" id="GO:0006744">
    <property type="term" value="P:ubiquinone biosynthetic process"/>
    <property type="evidence" value="ECO:0007669"/>
    <property type="project" value="UniProtKB-UniRule"/>
</dbReference>
<dbReference type="FunFam" id="1.20.5.570:FF:000001">
    <property type="entry name" value="3-octaprenyl-4-hydroxybenzoate carboxy-lyase"/>
    <property type="match status" value="1"/>
</dbReference>
<dbReference type="FunFam" id="3.40.1670.10:FF:000001">
    <property type="entry name" value="3-octaprenyl-4-hydroxybenzoate carboxy-lyase"/>
    <property type="match status" value="1"/>
</dbReference>
<dbReference type="Gene3D" id="1.20.5.570">
    <property type="entry name" value="Single helix bin"/>
    <property type="match status" value="1"/>
</dbReference>
<dbReference type="Gene3D" id="3.40.1670.10">
    <property type="entry name" value="UbiD C-terminal domain-like"/>
    <property type="match status" value="1"/>
</dbReference>
<dbReference type="HAMAP" id="MF_01636">
    <property type="entry name" value="UbiD"/>
    <property type="match status" value="1"/>
</dbReference>
<dbReference type="InterPro" id="IPR002830">
    <property type="entry name" value="UbiD"/>
</dbReference>
<dbReference type="InterPro" id="IPR049381">
    <property type="entry name" value="UbiD-like_C"/>
</dbReference>
<dbReference type="InterPro" id="IPR049383">
    <property type="entry name" value="UbiD-like_N"/>
</dbReference>
<dbReference type="InterPro" id="IPR023677">
    <property type="entry name" value="UbiD_bacteria"/>
</dbReference>
<dbReference type="InterPro" id="IPR048304">
    <property type="entry name" value="UbiD_Rift_dom"/>
</dbReference>
<dbReference type="NCBIfam" id="NF008175">
    <property type="entry name" value="PRK10922.1"/>
    <property type="match status" value="1"/>
</dbReference>
<dbReference type="NCBIfam" id="TIGR00148">
    <property type="entry name" value="UbiD family decarboxylase"/>
    <property type="match status" value="1"/>
</dbReference>
<dbReference type="PANTHER" id="PTHR30108">
    <property type="entry name" value="3-OCTAPRENYL-4-HYDROXYBENZOATE CARBOXY-LYASE-RELATED"/>
    <property type="match status" value="1"/>
</dbReference>
<dbReference type="PANTHER" id="PTHR30108:SF17">
    <property type="entry name" value="FERULIC ACID DECARBOXYLASE 1"/>
    <property type="match status" value="1"/>
</dbReference>
<dbReference type="Pfam" id="PF01977">
    <property type="entry name" value="UbiD"/>
    <property type="match status" value="1"/>
</dbReference>
<dbReference type="Pfam" id="PF20696">
    <property type="entry name" value="UbiD_C"/>
    <property type="match status" value="1"/>
</dbReference>
<dbReference type="Pfam" id="PF20695">
    <property type="entry name" value="UbiD_N"/>
    <property type="match status" value="1"/>
</dbReference>
<dbReference type="SUPFAM" id="SSF50475">
    <property type="entry name" value="FMN-binding split barrel"/>
    <property type="match status" value="1"/>
</dbReference>
<dbReference type="SUPFAM" id="SSF143968">
    <property type="entry name" value="UbiD C-terminal domain-like"/>
    <property type="match status" value="1"/>
</dbReference>
<comment type="function">
    <text evidence="1">Catalyzes the decarboxylation of 3-octaprenyl-4-hydroxy benzoate to 2-octaprenylphenol, an intermediate step in ubiquinone biosynthesis.</text>
</comment>
<comment type="catalytic activity">
    <reaction evidence="1">
        <text>a 4-hydroxy-3-(all-trans-polyprenyl)benzoate + H(+) = a 2-(all-trans-polyprenyl)phenol + CO2</text>
        <dbReference type="Rhea" id="RHEA:41680"/>
        <dbReference type="Rhea" id="RHEA-COMP:9514"/>
        <dbReference type="Rhea" id="RHEA-COMP:9516"/>
        <dbReference type="ChEBI" id="CHEBI:1269"/>
        <dbReference type="ChEBI" id="CHEBI:15378"/>
        <dbReference type="ChEBI" id="CHEBI:16526"/>
        <dbReference type="ChEBI" id="CHEBI:78396"/>
        <dbReference type="EC" id="4.1.1.98"/>
    </reaction>
</comment>
<comment type="cofactor">
    <cofactor evidence="1">
        <name>prenylated FMN</name>
        <dbReference type="ChEBI" id="CHEBI:87746"/>
    </cofactor>
    <text evidence="1">Binds 1 prenylated FMN per subunit.</text>
</comment>
<comment type="cofactor">
    <cofactor evidence="1">
        <name>Mn(2+)</name>
        <dbReference type="ChEBI" id="CHEBI:29035"/>
    </cofactor>
</comment>
<comment type="pathway">
    <text evidence="1">Cofactor biosynthesis; ubiquinone biosynthesis.</text>
</comment>
<comment type="subunit">
    <text evidence="1">Homohexamer.</text>
</comment>
<comment type="subcellular location">
    <subcellularLocation>
        <location evidence="1">Cell membrane</location>
        <topology evidence="1">Peripheral membrane protein</topology>
    </subcellularLocation>
</comment>
<comment type="similarity">
    <text evidence="1">Belongs to the UbiD family.</text>
</comment>
<protein>
    <recommendedName>
        <fullName evidence="1">3-octaprenyl-4-hydroxybenzoate carboxy-lyase</fullName>
        <ecNumber evidence="1">4.1.1.98</ecNumber>
    </recommendedName>
    <alternativeName>
        <fullName evidence="1">Polyprenyl p-hydroxybenzoate decarboxylase</fullName>
    </alternativeName>
</protein>
<organism>
    <name type="scientific">Glaesserella parasuis serovar 5 (strain SH0165)</name>
    <name type="common">Haemophilus parasuis</name>
    <dbReference type="NCBI Taxonomy" id="557723"/>
    <lineage>
        <taxon>Bacteria</taxon>
        <taxon>Pseudomonadati</taxon>
        <taxon>Pseudomonadota</taxon>
        <taxon>Gammaproteobacteria</taxon>
        <taxon>Pasteurellales</taxon>
        <taxon>Pasteurellaceae</taxon>
        <taxon>Glaesserella</taxon>
    </lineage>
</organism>